<organism>
    <name type="scientific">Homo sapiens</name>
    <name type="common">Human</name>
    <dbReference type="NCBI Taxonomy" id="9606"/>
    <lineage>
        <taxon>Eukaryota</taxon>
        <taxon>Metazoa</taxon>
        <taxon>Chordata</taxon>
        <taxon>Craniata</taxon>
        <taxon>Vertebrata</taxon>
        <taxon>Euteleostomi</taxon>
        <taxon>Mammalia</taxon>
        <taxon>Eutheria</taxon>
        <taxon>Euarchontoglires</taxon>
        <taxon>Primates</taxon>
        <taxon>Haplorrhini</taxon>
        <taxon>Catarrhini</taxon>
        <taxon>Hominidae</taxon>
        <taxon>Homo</taxon>
    </lineage>
</organism>
<gene>
    <name type="primary">ZNF417</name>
</gene>
<name>ZN417_HUMAN</name>
<reference key="1">
    <citation type="journal article" date="2004" name="Nat. Genet.">
        <title>Complete sequencing and characterization of 21,243 full-length human cDNAs.</title>
        <authorList>
            <person name="Ota T."/>
            <person name="Suzuki Y."/>
            <person name="Nishikawa T."/>
            <person name="Otsuki T."/>
            <person name="Sugiyama T."/>
            <person name="Irie R."/>
            <person name="Wakamatsu A."/>
            <person name="Hayashi K."/>
            <person name="Sato H."/>
            <person name="Nagai K."/>
            <person name="Kimura K."/>
            <person name="Makita H."/>
            <person name="Sekine M."/>
            <person name="Obayashi M."/>
            <person name="Nishi T."/>
            <person name="Shibahara T."/>
            <person name="Tanaka T."/>
            <person name="Ishii S."/>
            <person name="Yamamoto J."/>
            <person name="Saito K."/>
            <person name="Kawai Y."/>
            <person name="Isono Y."/>
            <person name="Nakamura Y."/>
            <person name="Nagahari K."/>
            <person name="Murakami K."/>
            <person name="Yasuda T."/>
            <person name="Iwayanagi T."/>
            <person name="Wagatsuma M."/>
            <person name="Shiratori A."/>
            <person name="Sudo H."/>
            <person name="Hosoiri T."/>
            <person name="Kaku Y."/>
            <person name="Kodaira H."/>
            <person name="Kondo H."/>
            <person name="Sugawara M."/>
            <person name="Takahashi M."/>
            <person name="Kanda K."/>
            <person name="Yokoi T."/>
            <person name="Furuya T."/>
            <person name="Kikkawa E."/>
            <person name="Omura Y."/>
            <person name="Abe K."/>
            <person name="Kamihara K."/>
            <person name="Katsuta N."/>
            <person name="Sato K."/>
            <person name="Tanikawa M."/>
            <person name="Yamazaki M."/>
            <person name="Ninomiya K."/>
            <person name="Ishibashi T."/>
            <person name="Yamashita H."/>
            <person name="Murakawa K."/>
            <person name="Fujimori K."/>
            <person name="Tanai H."/>
            <person name="Kimata M."/>
            <person name="Watanabe M."/>
            <person name="Hiraoka S."/>
            <person name="Chiba Y."/>
            <person name="Ishida S."/>
            <person name="Ono Y."/>
            <person name="Takiguchi S."/>
            <person name="Watanabe S."/>
            <person name="Yosida M."/>
            <person name="Hotuta T."/>
            <person name="Kusano J."/>
            <person name="Kanehori K."/>
            <person name="Takahashi-Fujii A."/>
            <person name="Hara H."/>
            <person name="Tanase T.-O."/>
            <person name="Nomura Y."/>
            <person name="Togiya S."/>
            <person name="Komai F."/>
            <person name="Hara R."/>
            <person name="Takeuchi K."/>
            <person name="Arita M."/>
            <person name="Imose N."/>
            <person name="Musashino K."/>
            <person name="Yuuki H."/>
            <person name="Oshima A."/>
            <person name="Sasaki N."/>
            <person name="Aotsuka S."/>
            <person name="Yoshikawa Y."/>
            <person name="Matsunawa H."/>
            <person name="Ichihara T."/>
            <person name="Shiohata N."/>
            <person name="Sano S."/>
            <person name="Moriya S."/>
            <person name="Momiyama H."/>
            <person name="Satoh N."/>
            <person name="Takami S."/>
            <person name="Terashima Y."/>
            <person name="Suzuki O."/>
            <person name="Nakagawa S."/>
            <person name="Senoh A."/>
            <person name="Mizoguchi H."/>
            <person name="Goto Y."/>
            <person name="Shimizu F."/>
            <person name="Wakebe H."/>
            <person name="Hishigaki H."/>
            <person name="Watanabe T."/>
            <person name="Sugiyama A."/>
            <person name="Takemoto M."/>
            <person name="Kawakami B."/>
            <person name="Yamazaki M."/>
            <person name="Watanabe K."/>
            <person name="Kumagai A."/>
            <person name="Itakura S."/>
            <person name="Fukuzumi Y."/>
            <person name="Fujimori Y."/>
            <person name="Komiyama M."/>
            <person name="Tashiro H."/>
            <person name="Tanigami A."/>
            <person name="Fujiwara T."/>
            <person name="Ono T."/>
            <person name="Yamada K."/>
            <person name="Fujii Y."/>
            <person name="Ozaki K."/>
            <person name="Hirao M."/>
            <person name="Ohmori Y."/>
            <person name="Kawabata A."/>
            <person name="Hikiji T."/>
            <person name="Kobatake N."/>
            <person name="Inagaki H."/>
            <person name="Ikema Y."/>
            <person name="Okamoto S."/>
            <person name="Okitani R."/>
            <person name="Kawakami T."/>
            <person name="Noguchi S."/>
            <person name="Itoh T."/>
            <person name="Shigeta K."/>
            <person name="Senba T."/>
            <person name="Matsumura K."/>
            <person name="Nakajima Y."/>
            <person name="Mizuno T."/>
            <person name="Morinaga M."/>
            <person name="Sasaki M."/>
            <person name="Togashi T."/>
            <person name="Oyama M."/>
            <person name="Hata H."/>
            <person name="Watanabe M."/>
            <person name="Komatsu T."/>
            <person name="Mizushima-Sugano J."/>
            <person name="Satoh T."/>
            <person name="Shirai Y."/>
            <person name="Takahashi Y."/>
            <person name="Nakagawa K."/>
            <person name="Okumura K."/>
            <person name="Nagase T."/>
            <person name="Nomura N."/>
            <person name="Kikuchi H."/>
            <person name="Masuho Y."/>
            <person name="Yamashita R."/>
            <person name="Nakai K."/>
            <person name="Yada T."/>
            <person name="Nakamura Y."/>
            <person name="Ohara O."/>
            <person name="Isogai T."/>
            <person name="Sugano S."/>
        </authorList>
    </citation>
    <scope>NUCLEOTIDE SEQUENCE [LARGE SCALE MRNA] (ISOFORM 2)</scope>
    <source>
        <tissue>Cerebellum</tissue>
    </source>
</reference>
<reference key="2">
    <citation type="journal article" date="2004" name="Nature">
        <title>The DNA sequence and biology of human chromosome 19.</title>
        <authorList>
            <person name="Grimwood J."/>
            <person name="Gordon L.A."/>
            <person name="Olsen A.S."/>
            <person name="Terry A."/>
            <person name="Schmutz J."/>
            <person name="Lamerdin J.E."/>
            <person name="Hellsten U."/>
            <person name="Goodstein D."/>
            <person name="Couronne O."/>
            <person name="Tran-Gyamfi M."/>
            <person name="Aerts A."/>
            <person name="Altherr M."/>
            <person name="Ashworth L."/>
            <person name="Bajorek E."/>
            <person name="Black S."/>
            <person name="Branscomb E."/>
            <person name="Caenepeel S."/>
            <person name="Carrano A.V."/>
            <person name="Caoile C."/>
            <person name="Chan Y.M."/>
            <person name="Christensen M."/>
            <person name="Cleland C.A."/>
            <person name="Copeland A."/>
            <person name="Dalin E."/>
            <person name="Dehal P."/>
            <person name="Denys M."/>
            <person name="Detter J.C."/>
            <person name="Escobar J."/>
            <person name="Flowers D."/>
            <person name="Fotopulos D."/>
            <person name="Garcia C."/>
            <person name="Georgescu A.M."/>
            <person name="Glavina T."/>
            <person name="Gomez M."/>
            <person name="Gonzales E."/>
            <person name="Groza M."/>
            <person name="Hammon N."/>
            <person name="Hawkins T."/>
            <person name="Haydu L."/>
            <person name="Ho I."/>
            <person name="Huang W."/>
            <person name="Israni S."/>
            <person name="Jett J."/>
            <person name="Kadner K."/>
            <person name="Kimball H."/>
            <person name="Kobayashi A."/>
            <person name="Larionov V."/>
            <person name="Leem S.-H."/>
            <person name="Lopez F."/>
            <person name="Lou Y."/>
            <person name="Lowry S."/>
            <person name="Malfatti S."/>
            <person name="Martinez D."/>
            <person name="McCready P.M."/>
            <person name="Medina C."/>
            <person name="Morgan J."/>
            <person name="Nelson K."/>
            <person name="Nolan M."/>
            <person name="Ovcharenko I."/>
            <person name="Pitluck S."/>
            <person name="Pollard M."/>
            <person name="Popkie A.P."/>
            <person name="Predki P."/>
            <person name="Quan G."/>
            <person name="Ramirez L."/>
            <person name="Rash S."/>
            <person name="Retterer J."/>
            <person name="Rodriguez A."/>
            <person name="Rogers S."/>
            <person name="Salamov A."/>
            <person name="Salazar A."/>
            <person name="She X."/>
            <person name="Smith D."/>
            <person name="Slezak T."/>
            <person name="Solovyev V."/>
            <person name="Thayer N."/>
            <person name="Tice H."/>
            <person name="Tsai M."/>
            <person name="Ustaszewska A."/>
            <person name="Vo N."/>
            <person name="Wagner M."/>
            <person name="Wheeler J."/>
            <person name="Wu K."/>
            <person name="Xie G."/>
            <person name="Yang J."/>
            <person name="Dubchak I."/>
            <person name="Furey T.S."/>
            <person name="DeJong P."/>
            <person name="Dickson M."/>
            <person name="Gordon D."/>
            <person name="Eichler E.E."/>
            <person name="Pennacchio L.A."/>
            <person name="Richardson P."/>
            <person name="Stubbs L."/>
            <person name="Rokhsar D.S."/>
            <person name="Myers R.M."/>
            <person name="Rubin E.M."/>
            <person name="Lucas S.M."/>
        </authorList>
    </citation>
    <scope>NUCLEOTIDE SEQUENCE [LARGE SCALE GENOMIC DNA]</scope>
</reference>
<reference key="3">
    <citation type="journal article" date="2004" name="Genome Res.">
        <title>The status, quality, and expansion of the NIH full-length cDNA project: the Mammalian Gene Collection (MGC).</title>
        <authorList>
            <consortium name="The MGC Project Team"/>
        </authorList>
    </citation>
    <scope>NUCLEOTIDE SEQUENCE [LARGE SCALE MRNA] (ISOFORM 1)</scope>
    <scope>VARIANT SER-495</scope>
    <source>
        <tissue>Pancreas</tissue>
    </source>
</reference>
<dbReference type="EMBL" id="AK293789">
    <property type="protein sequence ID" value="BAG57202.1"/>
    <property type="molecule type" value="mRNA"/>
</dbReference>
<dbReference type="EMBL" id="AC010326">
    <property type="status" value="NOT_ANNOTATED_CDS"/>
    <property type="molecule type" value="Genomic_DNA"/>
</dbReference>
<dbReference type="EMBL" id="BC025783">
    <property type="protein sequence ID" value="AAH25783.1"/>
    <property type="molecule type" value="mRNA"/>
</dbReference>
<dbReference type="CCDS" id="CCDS12965.1">
    <molecule id="Q8TAU3-1"/>
</dbReference>
<dbReference type="RefSeq" id="NP_689688.2">
    <molecule id="Q8TAU3-1"/>
    <property type="nucleotide sequence ID" value="NM_152475.3"/>
</dbReference>
<dbReference type="RefSeq" id="XP_054175834.1">
    <molecule id="Q8TAU3-1"/>
    <property type="nucleotide sequence ID" value="XM_054319859.1"/>
</dbReference>
<dbReference type="SMR" id="Q8TAU3"/>
<dbReference type="BioGRID" id="127075">
    <property type="interactions" value="181"/>
</dbReference>
<dbReference type="FunCoup" id="Q8TAU3">
    <property type="interactions" value="237"/>
</dbReference>
<dbReference type="IntAct" id="Q8TAU3">
    <property type="interactions" value="180"/>
</dbReference>
<dbReference type="MINT" id="Q8TAU3"/>
<dbReference type="STRING" id="9606.ENSP00000311319"/>
<dbReference type="MoonDB" id="Q8TAU3">
    <property type="type" value="Predicted"/>
</dbReference>
<dbReference type="iPTMnet" id="Q8TAU3"/>
<dbReference type="PhosphoSitePlus" id="Q8TAU3"/>
<dbReference type="SwissPalm" id="Q8TAU3"/>
<dbReference type="BioMuta" id="ZNF417"/>
<dbReference type="DMDM" id="296453053"/>
<dbReference type="jPOST" id="Q8TAU3"/>
<dbReference type="MassIVE" id="Q8TAU3"/>
<dbReference type="PaxDb" id="9606-ENSP00000311319"/>
<dbReference type="PeptideAtlas" id="Q8TAU3"/>
<dbReference type="ProteomicsDB" id="3983"/>
<dbReference type="ProteomicsDB" id="73921">
    <molecule id="Q8TAU3-1"/>
</dbReference>
<dbReference type="Pumba" id="Q8TAU3"/>
<dbReference type="Antibodypedia" id="33317">
    <property type="antibodies" value="96 antibodies from 15 providers"/>
</dbReference>
<dbReference type="DNASU" id="147687"/>
<dbReference type="Ensembl" id="ENST00000312026.6">
    <molecule id="Q8TAU3-1"/>
    <property type="protein sequence ID" value="ENSP00000311319.4"/>
    <property type="gene ID" value="ENSG00000173480.11"/>
</dbReference>
<dbReference type="GeneID" id="147687"/>
<dbReference type="KEGG" id="hsa:147687"/>
<dbReference type="MANE-Select" id="ENST00000312026.6">
    <property type="protein sequence ID" value="ENSP00000311319.4"/>
    <property type="RefSeq nucleotide sequence ID" value="NM_152475.3"/>
    <property type="RefSeq protein sequence ID" value="NP_689688.2"/>
</dbReference>
<dbReference type="UCSC" id="uc002qqq.4">
    <molecule id="Q8TAU3-1"/>
    <property type="organism name" value="human"/>
</dbReference>
<dbReference type="AGR" id="HGNC:20646"/>
<dbReference type="CTD" id="147687"/>
<dbReference type="DisGeNET" id="147687"/>
<dbReference type="GeneCards" id="ZNF417"/>
<dbReference type="HGNC" id="HGNC:20646">
    <property type="gene designation" value="ZNF417"/>
</dbReference>
<dbReference type="HPA" id="ENSG00000173480">
    <property type="expression patterns" value="Low tissue specificity"/>
</dbReference>
<dbReference type="neXtProt" id="NX_Q8TAU3"/>
<dbReference type="OpenTargets" id="ENSG00000173480"/>
<dbReference type="PharmGKB" id="PA134863699"/>
<dbReference type="VEuPathDB" id="HostDB:ENSG00000173480"/>
<dbReference type="eggNOG" id="KOG1721">
    <property type="taxonomic scope" value="Eukaryota"/>
</dbReference>
<dbReference type="GeneTree" id="ENSGT00940000164176"/>
<dbReference type="InParanoid" id="Q8TAU3"/>
<dbReference type="OMA" id="LGDVFHC"/>
<dbReference type="OrthoDB" id="9509693at2759"/>
<dbReference type="PAN-GO" id="Q8TAU3">
    <property type="GO annotations" value="4 GO annotations based on evolutionary models"/>
</dbReference>
<dbReference type="PhylomeDB" id="Q8TAU3"/>
<dbReference type="TreeFam" id="TF339848"/>
<dbReference type="PathwayCommons" id="Q8TAU3"/>
<dbReference type="Reactome" id="R-HSA-212436">
    <property type="pathway name" value="Generic Transcription Pathway"/>
</dbReference>
<dbReference type="SignaLink" id="Q8TAU3"/>
<dbReference type="BioGRID-ORCS" id="147687">
    <property type="hits" value="10 hits in 1074 CRISPR screens"/>
</dbReference>
<dbReference type="ChiTaRS" id="ZNF417">
    <property type="organism name" value="human"/>
</dbReference>
<dbReference type="GenomeRNAi" id="147687"/>
<dbReference type="Pharos" id="Q8TAU3">
    <property type="development level" value="Tdark"/>
</dbReference>
<dbReference type="PRO" id="PR:Q8TAU3"/>
<dbReference type="Proteomes" id="UP000005640">
    <property type="component" value="Chromosome 19"/>
</dbReference>
<dbReference type="RNAct" id="Q8TAU3">
    <property type="molecule type" value="protein"/>
</dbReference>
<dbReference type="Bgee" id="ENSG00000173480">
    <property type="expression patterns" value="Expressed in adenohypophysis and 108 other cell types or tissues"/>
</dbReference>
<dbReference type="ExpressionAtlas" id="Q8TAU3">
    <property type="expression patterns" value="baseline and differential"/>
</dbReference>
<dbReference type="GO" id="GO:0005634">
    <property type="term" value="C:nucleus"/>
    <property type="evidence" value="ECO:0000318"/>
    <property type="project" value="GO_Central"/>
</dbReference>
<dbReference type="GO" id="GO:0000981">
    <property type="term" value="F:DNA-binding transcription factor activity, RNA polymerase II-specific"/>
    <property type="evidence" value="ECO:0000318"/>
    <property type="project" value="GO_Central"/>
</dbReference>
<dbReference type="GO" id="GO:0000978">
    <property type="term" value="F:RNA polymerase II cis-regulatory region sequence-specific DNA binding"/>
    <property type="evidence" value="ECO:0000318"/>
    <property type="project" value="GO_Central"/>
</dbReference>
<dbReference type="GO" id="GO:0008270">
    <property type="term" value="F:zinc ion binding"/>
    <property type="evidence" value="ECO:0007669"/>
    <property type="project" value="UniProtKB-KW"/>
</dbReference>
<dbReference type="GO" id="GO:0006357">
    <property type="term" value="P:regulation of transcription by RNA polymerase II"/>
    <property type="evidence" value="ECO:0000318"/>
    <property type="project" value="GO_Central"/>
</dbReference>
<dbReference type="CDD" id="cd07765">
    <property type="entry name" value="KRAB_A-box"/>
    <property type="match status" value="1"/>
</dbReference>
<dbReference type="FunFam" id="3.30.160.60:FF:004101">
    <property type="match status" value="1"/>
</dbReference>
<dbReference type="FunFam" id="3.30.160.60:FF:000823">
    <property type="entry name" value="replication initiator 1 isoform X1"/>
    <property type="match status" value="1"/>
</dbReference>
<dbReference type="FunFam" id="3.30.160.60:FF:000249">
    <property type="entry name" value="Zinc finger protein 154"/>
    <property type="match status" value="1"/>
</dbReference>
<dbReference type="FunFam" id="3.30.160.60:FF:000755">
    <property type="entry name" value="zinc finger protein 174"/>
    <property type="match status" value="1"/>
</dbReference>
<dbReference type="FunFam" id="3.30.160.60:FF:000638">
    <property type="entry name" value="Zinc finger protein 184"/>
    <property type="match status" value="1"/>
</dbReference>
<dbReference type="FunFam" id="3.30.160.60:FF:000295">
    <property type="entry name" value="zinc finger protein 19"/>
    <property type="match status" value="1"/>
</dbReference>
<dbReference type="FunFam" id="3.30.160.60:FF:002343">
    <property type="entry name" value="Zinc finger protein 33A"/>
    <property type="match status" value="2"/>
</dbReference>
<dbReference type="FunFam" id="3.30.160.60:FF:000690">
    <property type="entry name" value="Zinc finger protein 354C"/>
    <property type="match status" value="1"/>
</dbReference>
<dbReference type="FunFam" id="3.30.160.60:FF:002967">
    <property type="entry name" value="Zinc finger protein 417"/>
    <property type="match status" value="1"/>
</dbReference>
<dbReference type="FunFam" id="3.30.160.60:FF:001437">
    <property type="entry name" value="Zinc finger protein 594"/>
    <property type="match status" value="1"/>
</dbReference>
<dbReference type="FunFam" id="3.30.160.60:FF:003352">
    <property type="entry name" value="Zinc finger protein 792"/>
    <property type="match status" value="1"/>
</dbReference>
<dbReference type="FunFam" id="3.30.160.60:FF:000642">
    <property type="entry name" value="Zinc finger with KRAB and SCAN domains 2"/>
    <property type="match status" value="1"/>
</dbReference>
<dbReference type="Gene3D" id="6.10.140.140">
    <property type="match status" value="1"/>
</dbReference>
<dbReference type="Gene3D" id="3.30.160.60">
    <property type="entry name" value="Classic Zinc Finger"/>
    <property type="match status" value="13"/>
</dbReference>
<dbReference type="InterPro" id="IPR001909">
    <property type="entry name" value="KRAB"/>
</dbReference>
<dbReference type="InterPro" id="IPR036051">
    <property type="entry name" value="KRAB_dom_sf"/>
</dbReference>
<dbReference type="InterPro" id="IPR050758">
    <property type="entry name" value="Znf_C2H2-type"/>
</dbReference>
<dbReference type="InterPro" id="IPR036236">
    <property type="entry name" value="Znf_C2H2_sf"/>
</dbReference>
<dbReference type="InterPro" id="IPR013087">
    <property type="entry name" value="Znf_C2H2_type"/>
</dbReference>
<dbReference type="PANTHER" id="PTHR23234:SF10">
    <property type="entry name" value="RIKEN CDNA 6720489N17 GENE-RELATED"/>
    <property type="match status" value="1"/>
</dbReference>
<dbReference type="PANTHER" id="PTHR23234">
    <property type="entry name" value="ZNF44 PROTEIN"/>
    <property type="match status" value="1"/>
</dbReference>
<dbReference type="Pfam" id="PF01352">
    <property type="entry name" value="KRAB"/>
    <property type="match status" value="1"/>
</dbReference>
<dbReference type="Pfam" id="PF00096">
    <property type="entry name" value="zf-C2H2"/>
    <property type="match status" value="10"/>
</dbReference>
<dbReference type="SMART" id="SM00349">
    <property type="entry name" value="KRAB"/>
    <property type="match status" value="1"/>
</dbReference>
<dbReference type="SMART" id="SM00355">
    <property type="entry name" value="ZnF_C2H2"/>
    <property type="match status" value="13"/>
</dbReference>
<dbReference type="SUPFAM" id="SSF57667">
    <property type="entry name" value="beta-beta-alpha zinc fingers"/>
    <property type="match status" value="8"/>
</dbReference>
<dbReference type="SUPFAM" id="SSF109640">
    <property type="entry name" value="KRAB domain (Kruppel-associated box)"/>
    <property type="match status" value="1"/>
</dbReference>
<dbReference type="PROSITE" id="PS50805">
    <property type="entry name" value="KRAB"/>
    <property type="match status" value="1"/>
</dbReference>
<dbReference type="PROSITE" id="PS00028">
    <property type="entry name" value="ZINC_FINGER_C2H2_1"/>
    <property type="match status" value="12"/>
</dbReference>
<dbReference type="PROSITE" id="PS50157">
    <property type="entry name" value="ZINC_FINGER_C2H2_2"/>
    <property type="match status" value="13"/>
</dbReference>
<proteinExistence type="evidence at protein level"/>
<accession>Q8TAU3</accession>
<accession>B4DEU1</accession>
<keyword id="KW-0025">Alternative splicing</keyword>
<keyword id="KW-0238">DNA-binding</keyword>
<keyword id="KW-0479">Metal-binding</keyword>
<keyword id="KW-0539">Nucleus</keyword>
<keyword id="KW-1267">Proteomics identification</keyword>
<keyword id="KW-1185">Reference proteome</keyword>
<keyword id="KW-0677">Repeat</keyword>
<keyword id="KW-0804">Transcription</keyword>
<keyword id="KW-0805">Transcription regulation</keyword>
<keyword id="KW-0862">Zinc</keyword>
<keyword id="KW-0863">Zinc-finger</keyword>
<comment type="function">
    <text>May be involved in transcriptional regulation.</text>
</comment>
<comment type="interaction">
    <interactant intactId="EBI-740727">
        <id>Q8TAU3</id>
    </interactant>
    <interactant intactId="EBI-10173507">
        <id>Q6UY14-3</id>
        <label>ADAMTSL4</label>
    </interactant>
    <organismsDiffer>false</organismsDiffer>
    <experiments>6</experiments>
</comment>
<comment type="interaction">
    <interactant intactId="EBI-740727">
        <id>Q8TAU3</id>
    </interactant>
    <interactant intactId="EBI-4400025">
        <id>Q9Y2T1</id>
        <label>AXIN2</label>
    </interactant>
    <organismsDiffer>false</organismsDiffer>
    <experiments>3</experiments>
</comment>
<comment type="interaction">
    <interactant intactId="EBI-740727">
        <id>Q8TAU3</id>
    </interactant>
    <interactant intactId="EBI-742722">
        <id>Q9BUH8</id>
        <label>BEGAIN</label>
    </interactant>
    <organismsDiffer>false</organismsDiffer>
    <experiments>6</experiments>
</comment>
<comment type="interaction">
    <interactant intactId="EBI-740727">
        <id>Q8TAU3</id>
    </interactant>
    <interactant intactId="EBI-724373">
        <id>Q7L4P6</id>
        <label>BEND5</label>
    </interactant>
    <organismsDiffer>false</organismsDiffer>
    <experiments>3</experiments>
</comment>
<comment type="interaction">
    <interactant intactId="EBI-740727">
        <id>Q8TAU3</id>
    </interactant>
    <interactant intactId="EBI-741753">
        <id>Q00994</id>
        <label>BEX3</label>
    </interactant>
    <organismsDiffer>false</organismsDiffer>
    <experiments>3</experiments>
</comment>
<comment type="interaction">
    <interactant intactId="EBI-740727">
        <id>Q8TAU3</id>
    </interactant>
    <interactant intactId="EBI-11975051">
        <id>Q8TD16-2</id>
        <label>BICD2</label>
    </interactant>
    <organismsDiffer>false</organismsDiffer>
    <experiments>3</experiments>
</comment>
<comment type="interaction">
    <interactant intactId="EBI-740727">
        <id>Q8TAU3</id>
    </interactant>
    <interactant intactId="EBI-2548012">
        <id>Q9H2G9</id>
        <label>BLZF1</label>
    </interactant>
    <organismsDiffer>false</organismsDiffer>
    <experiments>3</experiments>
</comment>
<comment type="interaction">
    <interactant intactId="EBI-740727">
        <id>Q8TAU3</id>
    </interactant>
    <interactant intactId="EBI-715110">
        <id>Q53FE4</id>
        <label>C4orf17</label>
    </interactant>
    <organismsDiffer>false</organismsDiffer>
    <experiments>3</experiments>
</comment>
<comment type="interaction">
    <interactant intactId="EBI-740727">
        <id>Q8TAU3</id>
    </interactant>
    <interactant intactId="EBI-751319">
        <id>Q9H257</id>
        <label>CARD9</label>
    </interactant>
    <organismsDiffer>false</organismsDiffer>
    <experiments>3</experiments>
</comment>
<comment type="interaction">
    <interactant intactId="EBI-740727">
        <id>Q8TAU3</id>
    </interactant>
    <interactant intactId="EBI-11524851">
        <id>Q8NA61-2</id>
        <label>CBY2</label>
    </interactant>
    <organismsDiffer>false</organismsDiffer>
    <experiments>3</experiments>
</comment>
<comment type="interaction">
    <interactant intactId="EBI-740727">
        <id>Q8TAU3</id>
    </interactant>
    <interactant intactId="EBI-744556">
        <id>Q96HB5</id>
        <label>CCDC120</label>
    </interactant>
    <organismsDiffer>false</organismsDiffer>
    <experiments>3</experiments>
</comment>
<comment type="interaction">
    <interactant intactId="EBI-740727">
        <id>Q8TAU3</id>
    </interactant>
    <interactant intactId="EBI-11977221">
        <id>Q86Z20</id>
        <label>CCDC125</label>
    </interactant>
    <organismsDiffer>false</organismsDiffer>
    <experiments>3</experiments>
</comment>
<comment type="interaction">
    <interactant intactId="EBI-740727">
        <id>Q8TAU3</id>
    </interactant>
    <interactant intactId="EBI-10171416">
        <id>Q96JN2-2</id>
        <label>CCDC136</label>
    </interactant>
    <organismsDiffer>false</organismsDiffer>
    <experiments>3</experiments>
</comment>
<comment type="interaction">
    <interactant intactId="EBI-740727">
        <id>Q8TAU3</id>
    </interactant>
    <interactant intactId="EBI-2808286">
        <id>Q2TAC2</id>
        <label>CCDC57</label>
    </interactant>
    <organismsDiffer>false</organismsDiffer>
    <experiments>3</experiments>
</comment>
<comment type="interaction">
    <interactant intactId="EBI-740727">
        <id>Q8TAU3</id>
    </interactant>
    <interactant intactId="EBI-748961">
        <id>O95273</id>
        <label>CCNDBP1</label>
    </interactant>
    <organismsDiffer>false</organismsDiffer>
    <experiments>4</experiments>
</comment>
<comment type="interaction">
    <interactant intactId="EBI-740727">
        <id>Q8TAU3</id>
    </interactant>
    <interactant intactId="EBI-1181367">
        <id>Q01850</id>
        <label>CDR2</label>
    </interactant>
    <organismsDiffer>false</organismsDiffer>
    <experiments>3</experiments>
</comment>
<comment type="interaction">
    <interactant intactId="EBI-740727">
        <id>Q8TAU3</id>
    </interactant>
    <interactant intactId="EBI-11063830">
        <id>Q86X02</id>
        <label>CDR2L</label>
    </interactant>
    <organismsDiffer>false</organismsDiffer>
    <experiments>3</experiments>
</comment>
<comment type="interaction">
    <interactant intactId="EBI-740727">
        <id>Q8TAU3</id>
    </interactant>
    <interactant intactId="EBI-744115">
        <id>Q9C0F1</id>
        <label>CEP44</label>
    </interactant>
    <organismsDiffer>false</organismsDiffer>
    <experiments>4</experiments>
</comment>
<comment type="interaction">
    <interactant intactId="EBI-740727">
        <id>Q8TAU3</id>
    </interactant>
    <interactant intactId="EBI-739624">
        <id>Q8NHQ1</id>
        <label>CEP70</label>
    </interactant>
    <organismsDiffer>false</organismsDiffer>
    <experiments>6</experiments>
</comment>
<comment type="interaction">
    <interactant intactId="EBI-740727">
        <id>Q8TAU3</id>
    </interactant>
    <interactant intactId="EBI-12344751">
        <id>Q5SZL2-5</id>
        <label>CEP85L</label>
    </interactant>
    <organismsDiffer>false</organismsDiffer>
    <experiments>3</experiments>
</comment>
<comment type="interaction">
    <interactant intactId="EBI-740727">
        <id>Q8TAU3</id>
    </interactant>
    <interactant intactId="EBI-12593838">
        <id>Q6WN34-2</id>
        <label>CHRDL2</label>
    </interactant>
    <organismsDiffer>false</organismsDiffer>
    <experiments>3</experiments>
</comment>
<comment type="interaction">
    <interactant intactId="EBI-740727">
        <id>Q8TAU3</id>
    </interactant>
    <interactant intactId="EBI-3866319">
        <id>Q9Y2V7</id>
        <label>COG6</label>
    </interactant>
    <organismsDiffer>false</organismsDiffer>
    <experiments>3</experiments>
</comment>
<comment type="interaction">
    <interactant intactId="EBI-740727">
        <id>Q8TAU3</id>
    </interactant>
    <interactant intactId="EBI-4311573">
        <id>Q96S65</id>
        <label>CSRNP1</label>
    </interactant>
    <organismsDiffer>false</organismsDiffer>
    <experiments>3</experiments>
</comment>
<comment type="interaction">
    <interactant intactId="EBI-740727">
        <id>Q8TAU3</id>
    </interactant>
    <interactant intactId="EBI-3867333">
        <id>A8MQ03</id>
        <label>CYSRT1</label>
    </interactant>
    <organismsDiffer>false</organismsDiffer>
    <experiments>5</experiments>
</comment>
<comment type="interaction">
    <interactant intactId="EBI-740727">
        <id>Q8TAU3</id>
    </interactant>
    <interactant intactId="EBI-12346463">
        <id>Q6ZN54-2</id>
        <label>DEF8</label>
    </interactant>
    <organismsDiffer>false</organismsDiffer>
    <experiments>3</experiments>
</comment>
<comment type="interaction">
    <interactant intactId="EBI-740727">
        <id>Q8TAU3</id>
    </interactant>
    <interactant intactId="EBI-739789">
        <id>Q92997</id>
        <label>DVL3</label>
    </interactant>
    <organismsDiffer>false</organismsDiffer>
    <experiments>3</experiments>
</comment>
<comment type="interaction">
    <interactant intactId="EBI-740727">
        <id>Q8TAU3</id>
    </interactant>
    <interactant intactId="EBI-718488">
        <id>O43281</id>
        <label>EFS</label>
    </interactant>
    <organismsDiffer>false</organismsDiffer>
    <experiments>3</experiments>
</comment>
<comment type="interaction">
    <interactant intactId="EBI-740727">
        <id>Q8TAU3</id>
    </interactant>
    <interactant intactId="EBI-12827735">
        <id>Q86X51</id>
        <label>EZHIP</label>
    </interactant>
    <organismsDiffer>false</organismsDiffer>
    <experiments>3</experiments>
</comment>
<comment type="interaction">
    <interactant intactId="EBI-740727">
        <id>Q8TAU3</id>
    </interactant>
    <interactant intactId="EBI-11960181">
        <id>A4D161</id>
        <label>FAM221A</label>
    </interactant>
    <organismsDiffer>false</organismsDiffer>
    <experiments>3</experiments>
</comment>
<comment type="interaction">
    <interactant intactId="EBI-740727">
        <id>Q8TAU3</id>
    </interactant>
    <interactant intactId="EBI-701903">
        <id>Q14192</id>
        <label>FHL2</label>
    </interactant>
    <organismsDiffer>false</organismsDiffer>
    <experiments>3</experiments>
</comment>
<comment type="interaction">
    <interactant intactId="EBI-740727">
        <id>Q8TAU3</id>
    </interactant>
    <interactant intactId="EBI-741101">
        <id>Q13643</id>
        <label>FHL3</label>
    </interactant>
    <organismsDiffer>false</organismsDiffer>
    <experiments>3</experiments>
</comment>
<comment type="interaction">
    <interactant intactId="EBI-740727">
        <id>Q8TAU3</id>
    </interactant>
    <interactant intactId="EBI-750641">
        <id>Q5TD97</id>
        <label>FHL5</label>
    </interactant>
    <organismsDiffer>false</organismsDiffer>
    <experiments>3</experiments>
</comment>
<comment type="interaction">
    <interactant intactId="EBI-740727">
        <id>Q8TAU3</id>
    </interactant>
    <interactant intactId="EBI-725515">
        <id>O43559</id>
        <label>FRS3</label>
    </interactant>
    <organismsDiffer>false</organismsDiffer>
    <experiments>3</experiments>
</comment>
<comment type="interaction">
    <interactant intactId="EBI-740727">
        <id>Q8TAU3</id>
    </interactant>
    <interactant intactId="EBI-5661036">
        <id>A1L4K1</id>
        <label>FSD2</label>
    </interactant>
    <organismsDiffer>false</organismsDiffer>
    <experiments>6</experiments>
</comment>
<comment type="interaction">
    <interactant intactId="EBI-740727">
        <id>Q8TAU3</id>
    </interactant>
    <interactant intactId="EBI-1571188">
        <id>P19883</id>
        <label>FST</label>
    </interactant>
    <organismsDiffer>false</organismsDiffer>
    <experiments>3</experiments>
</comment>
<comment type="interaction">
    <interactant intactId="EBI-740727">
        <id>Q8TAU3</id>
    </interactant>
    <interactant intactId="EBI-11022345">
        <id>P51114-2</id>
        <label>FXR1</label>
    </interactant>
    <organismsDiffer>false</organismsDiffer>
    <experiments>3</experiments>
</comment>
<comment type="interaction">
    <interactant intactId="EBI-740727">
        <id>Q8TAU3</id>
    </interactant>
    <interactant intactId="EBI-618309">
        <id>Q08379</id>
        <label>GOLGA2</label>
    </interactant>
    <organismsDiffer>false</organismsDiffer>
    <experiments>6</experiments>
</comment>
<comment type="interaction">
    <interactant intactId="EBI-740727">
        <id>Q8TAU3</id>
    </interactant>
    <interactant intactId="EBI-5916454">
        <id>A6NEM1</id>
        <label>GOLGA6L9</label>
    </interactant>
    <organismsDiffer>false</organismsDiffer>
    <experiments>3</experiments>
</comment>
<comment type="interaction">
    <interactant intactId="EBI-740727">
        <id>Q8TAU3</id>
    </interactant>
    <interactant intactId="EBI-11519926">
        <id>Q6PI77</id>
        <label>GPRASP3</label>
    </interactant>
    <organismsDiffer>false</organismsDiffer>
    <experiments>3</experiments>
</comment>
<comment type="interaction">
    <interactant intactId="EBI-740727">
        <id>Q8TAU3</id>
    </interactant>
    <interactant intactId="EBI-2549423">
        <id>Q6NT76</id>
        <label>HMBOX1</label>
    </interactant>
    <organismsDiffer>false</organismsDiffer>
    <experiments>6</experiments>
</comment>
<comment type="interaction">
    <interactant intactId="EBI-740727">
        <id>Q8TAU3</id>
    </interactant>
    <interactant intactId="EBI-10961706">
        <id>Q96ED9-2</id>
        <label>HOOK2</label>
    </interactant>
    <organismsDiffer>false</organismsDiffer>
    <experiments>3</experiments>
</comment>
<comment type="interaction">
    <interactant intactId="EBI-740727">
        <id>Q8TAU3</id>
    </interactant>
    <interactant intactId="EBI-740785">
        <id>P49639</id>
        <label>HOXA1</label>
    </interactant>
    <organismsDiffer>false</organismsDiffer>
    <experiments>5</experiments>
</comment>
<comment type="interaction">
    <interactant intactId="EBI-740727">
        <id>Q8TAU3</id>
    </interactant>
    <interactant intactId="EBI-7116203">
        <id>O75031</id>
        <label>HSF2BP</label>
    </interactant>
    <organismsDiffer>false</organismsDiffer>
    <experiments>3</experiments>
</comment>
<comment type="interaction">
    <interactant intactId="EBI-740727">
        <id>Q8TAU3</id>
    </interactant>
    <interactant intactId="EBI-947015">
        <id>P24592</id>
        <label>IGFBP6</label>
    </interactant>
    <organismsDiffer>false</organismsDiffer>
    <experiments>5</experiments>
</comment>
<comment type="interaction">
    <interactant intactId="EBI-740727">
        <id>Q8TAU3</id>
    </interactant>
    <interactant intactId="EBI-8638439">
        <id>Q8IYA8</id>
        <label>IHO1</label>
    </interactant>
    <organismsDiffer>false</organismsDiffer>
    <experiments>3</experiments>
</comment>
<comment type="interaction">
    <interactant intactId="EBI-740727">
        <id>Q8TAU3</id>
    </interactant>
    <interactant intactId="EBI-745305">
        <id>Q13422</id>
        <label>IKZF1</label>
    </interactant>
    <organismsDiffer>false</organismsDiffer>
    <experiments>3</experiments>
</comment>
<comment type="interaction">
    <interactant intactId="EBI-740727">
        <id>Q8TAU3</id>
    </interactant>
    <interactant intactId="EBI-11522367">
        <id>Q13422-7</id>
        <label>IKZF1</label>
    </interactant>
    <organismsDiffer>false</organismsDiffer>
    <experiments>3</experiments>
</comment>
<comment type="interaction">
    <interactant intactId="EBI-740727">
        <id>Q8TAU3</id>
    </interactant>
    <interactant intactId="EBI-747204">
        <id>Q9UKT9</id>
        <label>IKZF3</label>
    </interactant>
    <organismsDiffer>false</organismsDiffer>
    <experiments>3</experiments>
</comment>
<comment type="interaction">
    <interactant intactId="EBI-740727">
        <id>Q8TAU3</id>
    </interactant>
    <interactant intactId="EBI-10285157">
        <id>Q96EL1</id>
        <label>INKA1</label>
    </interactant>
    <organismsDiffer>false</organismsDiffer>
    <experiments>3</experiments>
</comment>
<comment type="interaction">
    <interactant intactId="EBI-740727">
        <id>Q8TAU3</id>
    </interactant>
    <interactant intactId="EBI-12094820">
        <id>A0A0C4DFT8</id>
        <label>JADE2</label>
    </interactant>
    <organismsDiffer>false</organismsDiffer>
    <experiments>3</experiments>
</comment>
<comment type="interaction">
    <interactant intactId="EBI-740727">
        <id>Q8TAU3</id>
    </interactant>
    <interactant intactId="EBI-17181882">
        <id>O75564-2</id>
        <label>JRK</label>
    </interactant>
    <organismsDiffer>false</organismsDiffer>
    <experiments>3</experiments>
</comment>
<comment type="interaction">
    <interactant intactId="EBI-740727">
        <id>Q8TAU3</id>
    </interactant>
    <interactant intactId="EBI-2556193">
        <id>Q63ZY3</id>
        <label>KANK2</label>
    </interactant>
    <organismsDiffer>false</organismsDiffer>
    <experiments>3</experiments>
</comment>
<comment type="interaction">
    <interactant intactId="EBI-740727">
        <id>Q8TAU3</id>
    </interactant>
    <interactant intactId="EBI-399080">
        <id>Q92993</id>
        <label>KAT5</label>
    </interactant>
    <organismsDiffer>false</organismsDiffer>
    <experiments>3</experiments>
</comment>
<comment type="interaction">
    <interactant intactId="EBI-740727">
        <id>Q8TAU3</id>
    </interactant>
    <interactant intactId="EBI-715394">
        <id>Q9H079</id>
        <label>KATNBL1</label>
    </interactant>
    <organismsDiffer>false</organismsDiffer>
    <experiments>3</experiments>
</comment>
<comment type="interaction">
    <interactant intactId="EBI-740727">
        <id>Q8TAU3</id>
    </interactant>
    <interactant intactId="EBI-11954971">
        <id>Q96MP8-2</id>
        <label>KCTD7</label>
    </interactant>
    <organismsDiffer>false</organismsDiffer>
    <experiments>3</experiments>
</comment>
<comment type="interaction">
    <interactant intactId="EBI-740727">
        <id>Q8TAU3</id>
    </interactant>
    <interactant intactId="EBI-3437878">
        <id>Q86T90</id>
        <label>KIAA1328</label>
    </interactant>
    <organismsDiffer>false</organismsDiffer>
    <experiments>3</experiments>
</comment>
<comment type="interaction">
    <interactant intactId="EBI-740727">
        <id>Q8TAU3</id>
    </interactant>
    <interactant intactId="EBI-8472129">
        <id>Q9HAQ2</id>
        <label>KIF9</label>
    </interactant>
    <organismsDiffer>false</organismsDiffer>
    <experiments>3</experiments>
</comment>
<comment type="interaction">
    <interactant intactId="EBI-740727">
        <id>Q8TAU3</id>
    </interactant>
    <interactant intactId="EBI-14069005">
        <id>Q9BVG8-5</id>
        <label>KIFC3</label>
    </interactant>
    <organismsDiffer>false</organismsDiffer>
    <experiments>3</experiments>
</comment>
<comment type="interaction">
    <interactant intactId="EBI-740727">
        <id>Q8TAU3</id>
    </interactant>
    <interactant intactId="EBI-1643885">
        <id>Q6P597</id>
        <label>KLC3</label>
    </interactant>
    <organismsDiffer>false</organismsDiffer>
    <experiments>3</experiments>
</comment>
<comment type="interaction">
    <interactant intactId="EBI-740727">
        <id>Q8TAU3</id>
    </interactant>
    <interactant intactId="EBI-739566">
        <id>P19012</id>
        <label>KRT15</label>
    </interactant>
    <organismsDiffer>false</organismsDiffer>
    <experiments>3</experiments>
</comment>
<comment type="interaction">
    <interactant intactId="EBI-740727">
        <id>Q8TAU3</id>
    </interactant>
    <interactant intactId="EBI-948001">
        <id>Q15323</id>
        <label>KRT31</label>
    </interactant>
    <organismsDiffer>false</organismsDiffer>
    <experiments>3</experiments>
</comment>
<comment type="interaction">
    <interactant intactId="EBI-740727">
        <id>Q8TAU3</id>
    </interactant>
    <interactant intactId="EBI-1058674">
        <id>Q92764</id>
        <label>KRT35</label>
    </interactant>
    <organismsDiffer>false</organismsDiffer>
    <experiments>3</experiments>
</comment>
<comment type="interaction">
    <interactant intactId="EBI-740727">
        <id>Q8TAU3</id>
    </interactant>
    <interactant intactId="EBI-1047263">
        <id>O76015</id>
        <label>KRT38</label>
    </interactant>
    <organismsDiffer>false</organismsDiffer>
    <experiments>6</experiments>
</comment>
<comment type="interaction">
    <interactant intactId="EBI-740727">
        <id>Q8TAU3</id>
    </interactant>
    <interactant intactId="EBI-11958242">
        <id>Q6A163</id>
        <label>KRT39</label>
    </interactant>
    <organismsDiffer>false</organismsDiffer>
    <experiments>3</experiments>
</comment>
<comment type="interaction">
    <interactant intactId="EBI-740727">
        <id>Q8TAU3</id>
    </interactant>
    <interactant intactId="EBI-10171697">
        <id>Q6A162</id>
        <label>KRT40</label>
    </interactant>
    <organismsDiffer>false</organismsDiffer>
    <experiments>6</experiments>
</comment>
<comment type="interaction">
    <interactant intactId="EBI-740727">
        <id>Q8TAU3</id>
    </interactant>
    <interactant intactId="EBI-11749135">
        <id>Q8IUG1</id>
        <label>KRTAP1-3</label>
    </interactant>
    <organismsDiffer>false</organismsDiffer>
    <experiments>3</experiments>
</comment>
<comment type="interaction">
    <interactant intactId="EBI-740727">
        <id>Q8TAU3</id>
    </interactant>
    <interactant intactId="EBI-10172150">
        <id>P60370</id>
        <label>KRTAP10-5</label>
    </interactant>
    <organismsDiffer>false</organismsDiffer>
    <experiments>5</experiments>
</comment>
<comment type="interaction">
    <interactant intactId="EBI-740727">
        <id>Q8TAU3</id>
    </interactant>
    <interactant intactId="EBI-10172290">
        <id>P60409</id>
        <label>KRTAP10-7</label>
    </interactant>
    <organismsDiffer>false</organismsDiffer>
    <experiments>6</experiments>
</comment>
<comment type="interaction">
    <interactant intactId="EBI-740727">
        <id>Q8TAU3</id>
    </interactant>
    <interactant intactId="EBI-10171774">
        <id>P60410</id>
        <label>KRTAP10-8</label>
    </interactant>
    <organismsDiffer>false</organismsDiffer>
    <experiments>6</experiments>
</comment>
<comment type="interaction">
    <interactant intactId="EBI-740727">
        <id>Q8TAU3</id>
    </interactant>
    <interactant intactId="EBI-10172052">
        <id>P60411</id>
        <label>KRTAP10-9</label>
    </interactant>
    <organismsDiffer>false</organismsDiffer>
    <experiments>3</experiments>
</comment>
<comment type="interaction">
    <interactant intactId="EBI-740727">
        <id>Q8TAU3</id>
    </interactant>
    <interactant intactId="EBI-11953334">
        <id>P60328</id>
        <label>KRTAP12-3</label>
    </interactant>
    <organismsDiffer>false</organismsDiffer>
    <experiments>3</experiments>
</comment>
<comment type="interaction">
    <interactant intactId="EBI-740727">
        <id>Q8TAU3</id>
    </interactant>
    <interactant intactId="EBI-10302392">
        <id>Q9BYQ6</id>
        <label>KRTAP4-11</label>
    </interactant>
    <organismsDiffer>false</organismsDiffer>
    <experiments>3</experiments>
</comment>
<comment type="interaction">
    <interactant intactId="EBI-740727">
        <id>Q8TAU3</id>
    </interactant>
    <interactant intactId="EBI-10172511">
        <id>Q9BYR5</id>
        <label>KRTAP4-2</label>
    </interactant>
    <organismsDiffer>false</organismsDiffer>
    <experiments>3</experiments>
</comment>
<comment type="interaction">
    <interactant intactId="EBI-740727">
        <id>Q8TAU3</id>
    </interactant>
    <interactant intactId="EBI-3958099">
        <id>P26371</id>
        <label>KRTAP5-9</label>
    </interactant>
    <organismsDiffer>false</organismsDiffer>
    <experiments>6</experiments>
</comment>
<comment type="interaction">
    <interactant intactId="EBI-740727">
        <id>Q8TAU3</id>
    </interactant>
    <interactant intactId="EBI-739657">
        <id>Q9BQD3</id>
        <label>KXD1</label>
    </interactant>
    <organismsDiffer>false</organismsDiffer>
    <experiments>6</experiments>
</comment>
<comment type="interaction">
    <interactant intactId="EBI-740727">
        <id>Q8TAU3</id>
    </interactant>
    <interactant intactId="EBI-12039345">
        <id>Q9UBR4-2</id>
        <label>LHX3</label>
    </interactant>
    <organismsDiffer>false</organismsDiffer>
    <experiments>3</experiments>
</comment>
<comment type="interaction">
    <interactant intactId="EBI-740727">
        <id>Q8TAU3</id>
    </interactant>
    <interactant intactId="EBI-12864460">
        <id>P48059-3</id>
        <label>LIMS1</label>
    </interactant>
    <organismsDiffer>false</organismsDiffer>
    <experiments>3</experiments>
</comment>
<comment type="interaction">
    <interactant intactId="EBI-740727">
        <id>Q8TAU3</id>
    </interactant>
    <interactant intactId="EBI-8639312">
        <id>P25800</id>
        <label>LMO1</label>
    </interactant>
    <organismsDiffer>false</organismsDiffer>
    <experiments>3</experiments>
</comment>
<comment type="interaction">
    <interactant intactId="EBI-740727">
        <id>Q8TAU3</id>
    </interactant>
    <interactant intactId="EBI-741355">
        <id>Q96LR2</id>
        <label>LURAP1</label>
    </interactant>
    <organismsDiffer>false</organismsDiffer>
    <experiments>3</experiments>
</comment>
<comment type="interaction">
    <interactant intactId="EBI-740727">
        <id>Q8TAU3</id>
    </interactant>
    <interactant intactId="EBI-1216080">
        <id>Q9Y250</id>
        <label>LZTS1</label>
    </interactant>
    <organismsDiffer>false</organismsDiffer>
    <experiments>3</experiments>
</comment>
<comment type="interaction">
    <interactant intactId="EBI-740727">
        <id>Q8TAU3</id>
    </interactant>
    <interactant intactId="EBI-741037">
        <id>Q9BRK4</id>
        <label>LZTS2</label>
    </interactant>
    <organismsDiffer>false</organismsDiffer>
    <experiments>6</experiments>
</comment>
<comment type="interaction">
    <interactant intactId="EBI-740727">
        <id>Q8TAU3</id>
    </interactant>
    <interactant intactId="EBI-10182930">
        <id>P43361</id>
        <label>MAGEA8</label>
    </interactant>
    <organismsDiffer>false</organismsDiffer>
    <experiments>3</experiments>
</comment>
<comment type="interaction">
    <interactant intactId="EBI-740727">
        <id>Q8TAU3</id>
    </interactant>
    <interactant intactId="EBI-307531">
        <id>P23508</id>
        <label>MCC</label>
    </interactant>
    <organismsDiffer>false</organismsDiffer>
    <experiments>3</experiments>
</comment>
<comment type="interaction">
    <interactant intactId="EBI-740727">
        <id>Q8TAU3</id>
    </interactant>
    <interactant intactId="EBI-11987923">
        <id>P59942</id>
        <label>MCCD1</label>
    </interactant>
    <organismsDiffer>false</organismsDiffer>
    <experiments>3</experiments>
</comment>
<comment type="interaction">
    <interactant intactId="EBI-740727">
        <id>Q8TAU3</id>
    </interactant>
    <interactant intactId="EBI-724076">
        <id>Q99750</id>
        <label>MDFI</label>
    </interactant>
    <organismsDiffer>false</organismsDiffer>
    <experiments>7</experiments>
</comment>
<comment type="interaction">
    <interactant intactId="EBI-740727">
        <id>Q8TAU3</id>
    </interactant>
    <interactant intactId="EBI-18582591">
        <id>Q99687-3</id>
        <label>MEIS3</label>
    </interactant>
    <organismsDiffer>false</organismsDiffer>
    <experiments>3</experiments>
</comment>
<comment type="interaction">
    <interactant intactId="EBI-740727">
        <id>Q8TAU3</id>
    </interactant>
    <interactant intactId="EBI-748397">
        <id>P50222</id>
        <label>MEOX2</label>
    </interactant>
    <organismsDiffer>false</organismsDiffer>
    <experiments>3</experiments>
</comment>
<comment type="interaction">
    <interactant intactId="EBI-740727">
        <id>Q8TAU3</id>
    </interactant>
    <interactant intactId="EBI-16439278">
        <id>Q6FHY5</id>
        <label>MEOX2</label>
    </interactant>
    <organismsDiffer>false</organismsDiffer>
    <experiments>3</experiments>
</comment>
<comment type="interaction">
    <interactant intactId="EBI-740727">
        <id>Q8TAU3</id>
    </interactant>
    <interactant intactId="EBI-10172526">
        <id>Q9UJV3-2</id>
        <label>MID2</label>
    </interactant>
    <organismsDiffer>false</organismsDiffer>
    <experiments>6</experiments>
</comment>
<comment type="interaction">
    <interactant intactId="EBI-740727">
        <id>Q8TAU3</id>
    </interactant>
    <interactant intactId="EBI-2801965">
        <id>Q5JXC2</id>
        <label>MIIP</label>
    </interactant>
    <organismsDiffer>false</organismsDiffer>
    <experiments>3</experiments>
</comment>
<comment type="interaction">
    <interactant intactId="EBI-740727">
        <id>Q8TAU3</id>
    </interactant>
    <interactant intactId="EBI-748896">
        <id>Q96HT8</id>
        <label>MRFAP1L1</label>
    </interactant>
    <organismsDiffer>false</organismsDiffer>
    <experiments>3</experiments>
</comment>
<comment type="interaction">
    <interactant intactId="EBI-740727">
        <id>Q8TAU3</id>
    </interactant>
    <interactant intactId="EBI-742948">
        <id>Q5JR59</id>
        <label>MTUS2</label>
    </interactant>
    <organismsDiffer>false</organismsDiffer>
    <experiments>3</experiments>
</comment>
<comment type="interaction">
    <interactant intactId="EBI-740727">
        <id>Q8TAU3</id>
    </interactant>
    <interactant intactId="EBI-11522433">
        <id>Q5JR59-3</id>
        <label>MTUS2</label>
    </interactant>
    <organismsDiffer>false</organismsDiffer>
    <experiments>3</experiments>
</comment>
<comment type="interaction">
    <interactant intactId="EBI-740727">
        <id>Q8TAU3</id>
    </interactant>
    <interactant intactId="EBI-17491620">
        <id>P13349</id>
        <label>MYF5</label>
    </interactant>
    <organismsDiffer>false</organismsDiffer>
    <experiments>3</experiments>
</comment>
<comment type="interaction">
    <interactant intactId="EBI-740727">
        <id>Q8TAU3</id>
    </interactant>
    <interactant intactId="EBI-6952711">
        <id>Q8WY64</id>
        <label>MYLIP</label>
    </interactant>
    <organismsDiffer>false</organismsDiffer>
    <experiments>3</experiments>
</comment>
<comment type="interaction">
    <interactant intactId="EBI-740727">
        <id>Q8TAU3</id>
    </interactant>
    <interactant intactId="EBI-8641936">
        <id>Q15742</id>
        <label>NAB2</label>
    </interactant>
    <organismsDiffer>false</organismsDiffer>
    <experiments>3</experiments>
</comment>
<comment type="interaction">
    <interactant intactId="EBI-740727">
        <id>Q8TAU3</id>
    </interactant>
    <interactant intactId="EBI-928842">
        <id>Q9GZM8</id>
        <label>NDEL1</label>
    </interactant>
    <organismsDiffer>false</organismsDiffer>
    <experiments>3</experiments>
</comment>
<comment type="interaction">
    <interactant intactId="EBI-740727">
        <id>Q8TAU3</id>
    </interactant>
    <interactant intactId="EBI-1246238">
        <id>P17568</id>
        <label>NDUFB7</label>
    </interactant>
    <organismsDiffer>false</organismsDiffer>
    <experiments>3</experiments>
</comment>
<comment type="interaction">
    <interactant intactId="EBI-740727">
        <id>Q8TAU3</id>
    </interactant>
    <interactant intactId="EBI-719716">
        <id>Q9Y2I6</id>
        <label>NINL</label>
    </interactant>
    <organismsDiffer>false</organismsDiffer>
    <experiments>4</experiments>
</comment>
<comment type="interaction">
    <interactant intactId="EBI-740727">
        <id>Q8TAU3</id>
    </interactant>
    <interactant intactId="EBI-11423380">
        <id>Q5M9Q1</id>
        <label>NKAPL</label>
    </interactant>
    <organismsDiffer>false</organismsDiffer>
    <experiments>3</experiments>
</comment>
<comment type="interaction">
    <interactant intactId="EBI-740727">
        <id>Q8TAU3</id>
    </interactant>
    <interactant intactId="EBI-1385894">
        <id>Q99801</id>
        <label>NKX3-1</label>
    </interactant>
    <organismsDiffer>false</organismsDiffer>
    <experiments>3</experiments>
</comment>
<comment type="interaction">
    <interactant intactId="EBI-740727">
        <id>Q8TAU3</id>
    </interactant>
    <interactant intactId="EBI-945833">
        <id>Q7Z3S9</id>
        <label>NOTCH2NLA</label>
    </interactant>
    <organismsDiffer>false</organismsDiffer>
    <experiments>3</experiments>
</comment>
<comment type="interaction">
    <interactant intactId="EBI-740727">
        <id>Q8TAU3</id>
    </interactant>
    <interactant intactId="EBI-22310682">
        <id>P0DPK4</id>
        <label>NOTCH2NLC</label>
    </interactant>
    <organismsDiffer>false</organismsDiffer>
    <experiments>3</experiments>
</comment>
<comment type="interaction">
    <interactant intactId="EBI-740727">
        <id>Q8TAU3</id>
    </interactant>
    <interactant intactId="EBI-536879">
        <id>O43482</id>
        <label>OIP5</label>
    </interactant>
    <organismsDiffer>false</organismsDiffer>
    <experiments>3</experiments>
</comment>
<comment type="interaction">
    <interactant intactId="EBI-740727">
        <id>Q8TAU3</id>
    </interactant>
    <interactant intactId="EBI-713786">
        <id>Q8IXK0</id>
        <label>PHC2</label>
    </interactant>
    <organismsDiffer>false</organismsDiffer>
    <experiments>3</experiments>
</comment>
<comment type="interaction">
    <interactant intactId="EBI-740727">
        <id>Q8TAU3</id>
    </interactant>
    <interactant intactId="EBI-79165">
        <id>Q9NRD5</id>
        <label>PICK1</label>
    </interactant>
    <organismsDiffer>false</organismsDiffer>
    <experiments>3</experiments>
</comment>
<comment type="interaction">
    <interactant intactId="EBI-740727">
        <id>Q8TAU3</id>
    </interactant>
    <interactant intactId="EBI-10232538">
        <id>Q8WWB5</id>
        <label>PIH1D2</label>
    </interactant>
    <organismsDiffer>false</organismsDiffer>
    <experiments>3</experiments>
</comment>
<comment type="interaction">
    <interactant intactId="EBI-740727">
        <id>Q8TAU3</id>
    </interactant>
    <interactant intactId="EBI-740019">
        <id>O15162</id>
        <label>PLSCR1</label>
    </interactant>
    <organismsDiffer>false</organismsDiffer>
    <experiments>3</experiments>
</comment>
<comment type="interaction">
    <interactant intactId="EBI-740727">
        <id>Q8TAU3</id>
    </interactant>
    <interactant intactId="EBI-302355">
        <id>Q9UL42</id>
        <label>PNMA2</label>
    </interactant>
    <organismsDiffer>false</organismsDiffer>
    <experiments>4</experiments>
</comment>
<comment type="interaction">
    <interactant intactId="EBI-740727">
        <id>Q8TAU3</id>
    </interactant>
    <interactant intactId="EBI-1567797">
        <id>Q8WWY3</id>
        <label>PRPF31</label>
    </interactant>
    <organismsDiffer>false</organismsDiffer>
    <experiments>3</experiments>
</comment>
<comment type="interaction">
    <interactant intactId="EBI-740727">
        <id>Q8TAU3</id>
    </interactant>
    <interactant intactId="EBI-746283">
        <id>Q96D15</id>
        <label>RCN3</label>
    </interactant>
    <organismsDiffer>false</organismsDiffer>
    <experiments>3</experiments>
</comment>
<comment type="interaction">
    <interactant intactId="EBI-740727">
        <id>Q8TAU3</id>
    </interactant>
    <interactant intactId="EBI-307352">
        <id>Q04864</id>
        <label>REL</label>
    </interactant>
    <organismsDiffer>false</organismsDiffer>
    <experiments>3</experiments>
</comment>
<comment type="interaction">
    <interactant intactId="EBI-740727">
        <id>Q8TAU3</id>
    </interactant>
    <interactant intactId="EBI-689202">
        <id>P17081</id>
        <label>RHOQ</label>
    </interactant>
    <organismsDiffer>false</organismsDiffer>
    <experiments>3</experiments>
</comment>
<comment type="interaction">
    <interactant intactId="EBI-740727">
        <id>Q8TAU3</id>
    </interactant>
    <interactant intactId="EBI-6868977">
        <id>Q5TA31</id>
        <label>RNF187</label>
    </interactant>
    <organismsDiffer>false</organismsDiffer>
    <experiments>3</experiments>
</comment>
<comment type="interaction">
    <interactant intactId="EBI-740727">
        <id>Q8TAU3</id>
    </interactant>
    <interactant intactId="EBI-18560266">
        <id>Q92753-1</id>
        <label>RORB</label>
    </interactant>
    <organismsDiffer>false</organismsDiffer>
    <experiments>3</experiments>
</comment>
<comment type="interaction">
    <interactant intactId="EBI-740727">
        <id>Q8TAU3</id>
    </interactant>
    <interactant intactId="EBI-1050213">
        <id>Q96KN7</id>
        <label>RPGRIP1</label>
    </interactant>
    <organismsDiffer>false</organismsDiffer>
    <experiments>3</experiments>
</comment>
<comment type="interaction">
    <interactant intactId="EBI-740727">
        <id>Q8TAU3</id>
    </interactant>
    <interactant intactId="EBI-747225">
        <id>Q59EK9</id>
        <label>RUNDC3A</label>
    </interactant>
    <organismsDiffer>false</organismsDiffer>
    <experiments>3</experiments>
</comment>
<comment type="interaction">
    <interactant intactId="EBI-740727">
        <id>Q8TAU3</id>
    </interactant>
    <interactant intactId="EBI-11957366">
        <id>Q59EK9-3</id>
        <label>RUNDC3A</label>
    </interactant>
    <organismsDiffer>false</organismsDiffer>
    <experiments>3</experiments>
</comment>
<comment type="interaction">
    <interactant intactId="EBI-740727">
        <id>Q8TAU3</id>
    </interactant>
    <interactant intactId="EBI-19952306">
        <id>O14492-2</id>
        <label>SH2B2</label>
    </interactant>
    <organismsDiffer>false</organismsDiffer>
    <experiments>3</experiments>
</comment>
<comment type="interaction">
    <interactant intactId="EBI-740727">
        <id>Q8TAU3</id>
    </interactant>
    <interactant intactId="EBI-358489">
        <id>Q96GM5</id>
        <label>SMARCD1</label>
    </interactant>
    <organismsDiffer>false</organismsDiffer>
    <experiments>3</experiments>
</comment>
<comment type="interaction">
    <interactant intactId="EBI-740727">
        <id>Q8TAU3</id>
    </interactant>
    <interactant intactId="EBI-11057552">
        <id>Q6GMV2</id>
        <label>SMYD5</label>
    </interactant>
    <organismsDiffer>false</organismsDiffer>
    <experiments>3</experiments>
</comment>
<comment type="interaction">
    <interactant intactId="EBI-740727">
        <id>Q8TAU3</id>
    </interactant>
    <interactant intactId="EBI-5235340">
        <id>Q7Z699</id>
        <label>SPRED1</label>
    </interactant>
    <organismsDiffer>false</organismsDiffer>
    <experiments>3</experiments>
</comment>
<comment type="interaction">
    <interactant intactId="EBI-740727">
        <id>Q8TAU3</id>
    </interactant>
    <interactant intactId="EBI-7082156">
        <id>Q7Z698</id>
        <label>SPRED2</label>
    </interactant>
    <organismsDiffer>false</organismsDiffer>
    <experiments>3</experiments>
</comment>
<comment type="interaction">
    <interactant intactId="EBI-740727">
        <id>Q8TAU3</id>
    </interactant>
    <interactant intactId="EBI-3866665">
        <id>O43609</id>
        <label>SPRY1</label>
    </interactant>
    <organismsDiffer>false</organismsDiffer>
    <experiments>3</experiments>
</comment>
<comment type="interaction">
    <interactant intactId="EBI-740727">
        <id>Q8TAU3</id>
    </interactant>
    <interactant intactId="EBI-742487">
        <id>O43597</id>
        <label>SPRY2</label>
    </interactant>
    <organismsDiffer>false</organismsDiffer>
    <experiments>3</experiments>
</comment>
<comment type="interaction">
    <interactant intactId="EBI-740727">
        <id>Q8TAU3</id>
    </interactant>
    <interactant intactId="EBI-2212028">
        <id>Q9Y2D8</id>
        <label>SSX2IP</label>
    </interactant>
    <organismsDiffer>false</organismsDiffer>
    <experiments>3</experiments>
</comment>
<comment type="interaction">
    <interactant intactId="EBI-740727">
        <id>Q8TAU3</id>
    </interactant>
    <interactant intactId="EBI-714135">
        <id>O75558</id>
        <label>STX11</label>
    </interactant>
    <organismsDiffer>false</organismsDiffer>
    <experiments>6</experiments>
</comment>
<comment type="interaction">
    <interactant intactId="EBI-740727">
        <id>Q8TAU3</id>
    </interactant>
    <interactant intactId="EBI-349968">
        <id>O43463</id>
        <label>SUV39H1</label>
    </interactant>
    <organismsDiffer>false</organismsDiffer>
    <experiments>3</experiments>
</comment>
<comment type="interaction">
    <interactant intactId="EBI-740727">
        <id>Q8TAU3</id>
    </interactant>
    <interactant intactId="EBI-742268">
        <id>O75478</id>
        <label>TADA2A</label>
    </interactant>
    <organismsDiffer>false</organismsDiffer>
    <experiments>3</experiments>
</comment>
<comment type="interaction">
    <interactant intactId="EBI-740727">
        <id>Q8TAU3</id>
    </interactant>
    <interactant intactId="EBI-533224">
        <id>P15884</id>
        <label>TCF4</label>
    </interactant>
    <organismsDiffer>false</organismsDiffer>
    <experiments>3</experiments>
</comment>
<comment type="interaction">
    <interactant intactId="EBI-740727">
        <id>Q8TAU3</id>
    </interactant>
    <interactant intactId="EBI-750487">
        <id>Q8WW24</id>
        <label>TEKT4</label>
    </interactant>
    <organismsDiffer>false</organismsDiffer>
    <experiments>3</experiments>
</comment>
<comment type="interaction">
    <interactant intactId="EBI-740727">
        <id>Q8TAU3</id>
    </interactant>
    <interactant intactId="EBI-1105213">
        <id>Q9UBB9</id>
        <label>TFIP11</label>
    </interactant>
    <organismsDiffer>false</organismsDiffer>
    <experiments>4</experiments>
</comment>
<comment type="interaction">
    <interactant intactId="EBI-740727">
        <id>Q8TAU3</id>
    </interactant>
    <interactant intactId="EBI-11741437">
        <id>Q08117-2</id>
        <label>TLE5</label>
    </interactant>
    <organismsDiffer>false</organismsDiffer>
    <experiments>3</experiments>
</comment>
<comment type="interaction">
    <interactant intactId="EBI-740727">
        <id>Q8TAU3</id>
    </interactant>
    <interactant intactId="EBI-949753">
        <id>Q63HR2</id>
        <label>TNS2</label>
    </interactant>
    <organismsDiffer>false</organismsDiffer>
    <experiments>9</experiments>
</comment>
<comment type="interaction">
    <interactant intactId="EBI-740727">
        <id>Q8TAU3</id>
    </interactant>
    <interactant intactId="EBI-359224">
        <id>Q13077</id>
        <label>TRAF1</label>
    </interactant>
    <organismsDiffer>false</organismsDiffer>
    <experiments>3</experiments>
</comment>
<comment type="interaction">
    <interactant intactId="EBI-740727">
        <id>Q8TAU3</id>
    </interactant>
    <interactant intactId="EBI-355744">
        <id>Q12933</id>
        <label>TRAF2</label>
    </interactant>
    <organismsDiffer>false</organismsDiffer>
    <experiments>3</experiments>
</comment>
<comment type="interaction">
    <interactant intactId="EBI-740727">
        <id>Q8TAU3</id>
    </interactant>
    <interactant intactId="EBI-492476">
        <id>Q96RU7</id>
        <label>TRIB3</label>
    </interactant>
    <organismsDiffer>false</organismsDiffer>
    <experiments>3</experiments>
</comment>
<comment type="interaction">
    <interactant intactId="EBI-740727">
        <id>Q8TAU3</id>
    </interactant>
    <interactant intactId="EBI-740098">
        <id>P36406</id>
        <label>TRIM23</label>
    </interactant>
    <organismsDiffer>false</organismsDiffer>
    <experiments>3</experiments>
</comment>
<comment type="interaction">
    <interactant intactId="EBI-740727">
        <id>Q8TAU3</id>
    </interactant>
    <interactant intactId="EBI-719493">
        <id>P14373</id>
        <label>TRIM27</label>
    </interactant>
    <organismsDiffer>false</organismsDiffer>
    <experiments>7</experiments>
</comment>
<comment type="interaction">
    <interactant intactId="EBI-740727">
        <id>Q8TAU3</id>
    </interactant>
    <interactant intactId="EBI-2341518">
        <id>Q9NQ86</id>
        <label>TRIM36</label>
    </interactant>
    <organismsDiffer>false</organismsDiffer>
    <experiments>3</experiments>
</comment>
<comment type="interaction">
    <interactant intactId="EBI-740727">
        <id>Q8TAU3</id>
    </interactant>
    <interactant intactId="EBI-741602">
        <id>O94972</id>
        <label>TRIM37</label>
    </interactant>
    <organismsDiffer>false</organismsDiffer>
    <experiments>4</experiments>
</comment>
<comment type="interaction">
    <interactant intactId="EBI-740727">
        <id>Q8TAU3</id>
    </interactant>
    <interactant intactId="EBI-725997">
        <id>Q8WV44</id>
        <label>TRIM41</label>
    </interactant>
    <organismsDiffer>false</organismsDiffer>
    <experiments>8</experiments>
</comment>
<comment type="interaction">
    <interactant intactId="EBI-740727">
        <id>Q8TAU3</id>
    </interactant>
    <interactant intactId="EBI-2130429">
        <id>Q9BYV2</id>
        <label>TRIM54</label>
    </interactant>
    <organismsDiffer>false</organismsDiffer>
    <experiments>6</experiments>
</comment>
<comment type="interaction">
    <interactant intactId="EBI-740727">
        <id>Q8TAU3</id>
    </interactant>
    <interactant intactId="EBI-12806590">
        <id>Q86WV8</id>
        <label>TSC1</label>
    </interactant>
    <organismsDiffer>false</organismsDiffer>
    <experiments>3</experiments>
</comment>
<comment type="interaction">
    <interactant intactId="EBI-740727">
        <id>Q8TAU3</id>
    </interactant>
    <interactant intactId="EBI-744794">
        <id>Q9BZW7</id>
        <label>TSGA10</label>
    </interactant>
    <organismsDiffer>false</organismsDiffer>
    <experiments>3</experiments>
</comment>
<comment type="interaction">
    <interactant intactId="EBI-740727">
        <id>Q8TAU3</id>
    </interactant>
    <interactant intactId="EBI-9090990">
        <id>Q5W5X9-3</id>
        <label>TTC23</label>
    </interactant>
    <organismsDiffer>false</organismsDiffer>
    <experiments>3</experiments>
</comment>
<comment type="interaction">
    <interactant intactId="EBI-740727">
        <id>Q8TAU3</id>
    </interactant>
    <interactant intactId="EBI-749812">
        <id>Q6PKC3</id>
        <label>TXNDC11</label>
    </interactant>
    <organismsDiffer>false</organismsDiffer>
    <experiments>3</experiments>
</comment>
<comment type="interaction">
    <interactant intactId="EBI-740727">
        <id>Q8TAU3</id>
    </interactant>
    <interactant intactId="EBI-632461">
        <id>Q01081</id>
        <label>U2AF1</label>
    </interactant>
    <organismsDiffer>false</organismsDiffer>
    <experiments>3</experiments>
</comment>
<comment type="interaction">
    <interactant intactId="EBI-740727">
        <id>Q8TAU3</id>
    </interactant>
    <interactant intactId="EBI-739895">
        <id>Q8N6Y0</id>
        <label>USHBP1</label>
    </interactant>
    <organismsDiffer>false</organismsDiffer>
    <experiments>3</experiments>
</comment>
<comment type="interaction">
    <interactant intactId="EBI-740727">
        <id>Q8TAU3</id>
    </interactant>
    <interactant intactId="EBI-10249550">
        <id>Q6EMK4</id>
        <label>VASN</label>
    </interactant>
    <organismsDiffer>false</organismsDiffer>
    <experiments>3</experiments>
</comment>
<comment type="interaction">
    <interactant intactId="EBI-740727">
        <id>Q8TAU3</id>
    </interactant>
    <interactant intactId="EBI-17974829">
        <id>Q6GMQ7</id>
        <label>VPS16</label>
    </interactant>
    <organismsDiffer>false</organismsDiffer>
    <experiments>3</experiments>
</comment>
<comment type="interaction">
    <interactant intactId="EBI-740727">
        <id>Q8TAU3</id>
    </interactant>
    <interactant intactId="EBI-2799833">
        <id>Q8N1B4</id>
        <label>VPS52</label>
    </interactant>
    <organismsDiffer>false</organismsDiffer>
    <experiments>3</experiments>
</comment>
<comment type="interaction">
    <interactant intactId="EBI-740727">
        <id>Q8TAU3</id>
    </interactant>
    <interactant intactId="EBI-11957238">
        <id>Q2TAL6</id>
        <label>VWC2</label>
    </interactant>
    <organismsDiffer>false</organismsDiffer>
    <experiments>3</experiments>
</comment>
<comment type="interaction">
    <interactant intactId="EBI-740727">
        <id>Q8TAU3</id>
    </interactant>
    <interactant intactId="EBI-2682961">
        <id>Q9Y2K1</id>
        <label>ZBTB1</label>
    </interactant>
    <organismsDiffer>false</organismsDiffer>
    <experiments>3</experiments>
</comment>
<comment type="interaction">
    <interactant intactId="EBI-740727">
        <id>Q8TAU3</id>
    </interactant>
    <interactant intactId="EBI-10235384">
        <id>Q96DT7</id>
        <label>ZBTB10</label>
    </interactant>
    <organismsDiffer>false</organismsDiffer>
    <experiments>3</experiments>
</comment>
<comment type="interaction">
    <interactant intactId="EBI-740727">
        <id>Q8TAU3</id>
    </interactant>
    <interactant intactId="EBI-12017160">
        <id>Q96DT7-3</id>
        <label>ZBTB10</label>
    </interactant>
    <organismsDiffer>false</organismsDiffer>
    <experiments>3</experiments>
</comment>
<comment type="interaction">
    <interactant intactId="EBI-740727">
        <id>Q8TAU3</id>
    </interactant>
    <interactant intactId="EBI-740718">
        <id>O43298</id>
        <label>ZBTB43</label>
    </interactant>
    <organismsDiffer>false</organismsDiffer>
    <experiments>4</experiments>
</comment>
<comment type="interaction">
    <interactant intactId="EBI-740727">
        <id>Q8TAU3</id>
    </interactant>
    <interactant intactId="EBI-742740">
        <id>Q96BR9</id>
        <label>ZBTB8A</label>
    </interactant>
    <organismsDiffer>false</organismsDiffer>
    <experiments>6</experiments>
</comment>
<comment type="interaction">
    <interactant intactId="EBI-740727">
        <id>Q8TAU3</id>
    </interactant>
    <interactant intactId="EBI-395708">
        <id>Q96C00</id>
        <label>ZBTB9</label>
    </interactant>
    <organismsDiffer>false</organismsDiffer>
    <experiments>3</experiments>
</comment>
<comment type="interaction">
    <interactant intactId="EBI-740727">
        <id>Q8TAU3</id>
    </interactant>
    <interactant intactId="EBI-7850213">
        <id>Q9UDW3</id>
        <label>ZMAT5</label>
    </interactant>
    <organismsDiffer>false</organismsDiffer>
    <experiments>3</experiments>
</comment>
<comment type="interaction">
    <interactant intactId="EBI-740727">
        <id>Q8TAU3</id>
    </interactant>
    <interactant intactId="EBI-741694">
        <id>P49910</id>
        <label>ZNF165</label>
    </interactant>
    <organismsDiffer>false</organismsDiffer>
    <experiments>3</experiments>
</comment>
<comment type="interaction">
    <interactant intactId="EBI-740727">
        <id>Q8TAU3</id>
    </interactant>
    <interactant intactId="EBI-12884200">
        <id>P17023</id>
        <label>ZNF19</label>
    </interactant>
    <organismsDiffer>false</organismsDiffer>
    <experiments>3</experiments>
</comment>
<comment type="interaction">
    <interactant intactId="EBI-740727">
        <id>Q8TAU3</id>
    </interactant>
    <interactant intactId="EBI-717634">
        <id>P17024</id>
        <label>ZNF20</label>
    </interactant>
    <organismsDiffer>false</organismsDiffer>
    <experiments>3</experiments>
</comment>
<comment type="interaction">
    <interactant intactId="EBI-740727">
        <id>Q8TAU3</id>
    </interactant>
    <interactant intactId="EBI-12895421">
        <id>Q8IVP9</id>
        <label>ZNF547</label>
    </interactant>
    <organismsDiffer>false</organismsDiffer>
    <experiments>3</experiments>
</comment>
<comment type="interaction">
    <interactant intactId="EBI-740727">
        <id>Q8TAU3</id>
    </interactant>
    <interactant intactId="EBI-10172590">
        <id>Q7Z3I7</id>
        <label>ZNF572</label>
    </interactant>
    <organismsDiffer>false</organismsDiffer>
    <experiments>3</experiments>
</comment>
<comment type="interaction">
    <interactant intactId="EBI-740727">
        <id>Q8TAU3</id>
    </interactant>
    <interactant intactId="EBI-6427977">
        <id>Q96SQ5</id>
        <label>ZNF587</label>
    </interactant>
    <organismsDiffer>false</organismsDiffer>
    <experiments>3</experiments>
</comment>
<comment type="interaction">
    <interactant intactId="EBI-740727">
        <id>Q8TAU3</id>
    </interactant>
    <interactant intactId="EBI-12310821">
        <id>Q9UC07-2</id>
        <label>ZNF69</label>
    </interactant>
    <organismsDiffer>false</organismsDiffer>
    <experiments>3</experiments>
</comment>
<comment type="interaction">
    <interactant intactId="EBI-740727">
        <id>Q8TAU3</id>
    </interactant>
    <interactant intactId="EBI-7138235">
        <id>Q9NQZ8</id>
        <label>ZNF71</label>
    </interactant>
    <organismsDiffer>false</organismsDiffer>
    <experiments>3</experiments>
</comment>
<comment type="interaction">
    <interactant intactId="EBI-740727">
        <id>Q8TAU3</id>
    </interactant>
    <interactant intactId="EBI-1210580">
        <id>Q9H5H4</id>
        <label>ZNF768</label>
    </interactant>
    <organismsDiffer>false</organismsDiffer>
    <experiments>3</experiments>
</comment>
<comment type="interaction">
    <interactant intactId="EBI-740727">
        <id>Q8TAU3</id>
    </interactant>
    <interactant intactId="EBI-10251462">
        <id>Q6NX45</id>
        <label>ZNF774</label>
    </interactant>
    <organismsDiffer>false</organismsDiffer>
    <experiments>3</experiments>
</comment>
<comment type="interaction">
    <interactant intactId="EBI-740727">
        <id>Q8TAU3</id>
    </interactant>
    <interactant intactId="EBI-11962574">
        <id>Q96EG3</id>
        <label>ZNF837</label>
    </interactant>
    <organismsDiffer>false</organismsDiffer>
    <experiments>6</experiments>
</comment>
<comment type="interaction">
    <interactant intactId="EBI-740727">
        <id>Q8TAU3</id>
    </interactant>
    <interactant intactId="EBI-18141506">
        <id>Q49A12</id>
        <label>ZNF85</label>
    </interactant>
    <organismsDiffer>false</organismsDiffer>
    <experiments>3</experiments>
</comment>
<comment type="interaction">
    <interactant intactId="EBI-740727">
        <id>Q8TAU3</id>
    </interactant>
    <interactant intactId="EBI-527853">
        <id>Q9UGI0</id>
        <label>ZRANB1</label>
    </interactant>
    <organismsDiffer>false</organismsDiffer>
    <experiments>3</experiments>
</comment>
<comment type="subcellular location">
    <subcellularLocation>
        <location evidence="6">Nucleus</location>
    </subcellularLocation>
</comment>
<comment type="alternative products">
    <event type="alternative splicing"/>
    <isoform>
        <id>Q8TAU3-1</id>
        <name>1</name>
        <sequence type="displayed"/>
    </isoform>
    <isoform>
        <id>Q8TAU3-2</id>
        <name>2</name>
        <sequence type="described" ref="VSP_055950"/>
    </isoform>
</comment>
<comment type="similarity">
    <text evidence="6">Belongs to the krueppel C2H2-type zinc-finger protein family.</text>
</comment>
<evidence type="ECO:0000255" key="1">
    <source>
        <dbReference type="PROSITE-ProRule" id="PRU00042"/>
    </source>
</evidence>
<evidence type="ECO:0000255" key="2">
    <source>
        <dbReference type="PROSITE-ProRule" id="PRU00119"/>
    </source>
</evidence>
<evidence type="ECO:0000256" key="3">
    <source>
        <dbReference type="SAM" id="MobiDB-lite"/>
    </source>
</evidence>
<evidence type="ECO:0000269" key="4">
    <source>
    </source>
</evidence>
<evidence type="ECO:0000303" key="5">
    <source>
    </source>
</evidence>
<evidence type="ECO:0000305" key="6"/>
<feature type="chain" id="PRO_0000233985" description="Zinc finger protein 417">
    <location>
        <begin position="1"/>
        <end position="575"/>
    </location>
</feature>
<feature type="domain" description="KRAB" evidence="2">
    <location>
        <begin position="15"/>
        <end position="88"/>
    </location>
</feature>
<feature type="zinc finger region" description="C2H2-type 1" evidence="1">
    <location>
        <begin position="92"/>
        <end position="114"/>
    </location>
</feature>
<feature type="zinc finger region" description="C2H2-type 2" evidence="1">
    <location>
        <begin position="240"/>
        <end position="262"/>
    </location>
</feature>
<feature type="zinc finger region" description="C2H2-type 3" evidence="1">
    <location>
        <begin position="268"/>
        <end position="290"/>
    </location>
</feature>
<feature type="zinc finger region" description="C2H2-type 4" evidence="1">
    <location>
        <begin position="296"/>
        <end position="318"/>
    </location>
</feature>
<feature type="zinc finger region" description="C2H2-type 5; degenerate" evidence="1">
    <location>
        <begin position="324"/>
        <end position="346"/>
    </location>
</feature>
<feature type="zinc finger region" description="C2H2-type 6" evidence="1">
    <location>
        <begin position="352"/>
        <end position="374"/>
    </location>
</feature>
<feature type="zinc finger region" description="C2H2-type 7" evidence="1">
    <location>
        <begin position="380"/>
        <end position="402"/>
    </location>
</feature>
<feature type="zinc finger region" description="C2H2-type 8" evidence="1">
    <location>
        <begin position="408"/>
        <end position="430"/>
    </location>
</feature>
<feature type="zinc finger region" description="C2H2-type 9" evidence="1">
    <location>
        <begin position="436"/>
        <end position="458"/>
    </location>
</feature>
<feature type="zinc finger region" description="C2H2-type 10" evidence="1">
    <location>
        <begin position="464"/>
        <end position="486"/>
    </location>
</feature>
<feature type="zinc finger region" description="C2H2-type 11" evidence="1">
    <location>
        <begin position="492"/>
        <end position="514"/>
    </location>
</feature>
<feature type="zinc finger region" description="C2H2-type 12" evidence="1">
    <location>
        <begin position="520"/>
        <end position="542"/>
    </location>
</feature>
<feature type="zinc finger region" description="C2H2-type 13" evidence="1">
    <location>
        <begin position="548"/>
        <end position="570"/>
    </location>
</feature>
<feature type="region of interest" description="Disordered" evidence="3">
    <location>
        <begin position="69"/>
        <end position="88"/>
    </location>
</feature>
<feature type="compositionally biased region" description="Polar residues" evidence="3">
    <location>
        <begin position="71"/>
        <end position="81"/>
    </location>
</feature>
<feature type="splice variant" id="VSP_055950" description="In isoform 2." evidence="5">
    <location>
        <begin position="1"/>
        <end position="199"/>
    </location>
</feature>
<feature type="sequence variant" id="VAR_060275" description="In dbSNP:rs10416584." evidence="4">
    <original>N</original>
    <variation>S</variation>
    <location>
        <position position="495"/>
    </location>
</feature>
<feature type="sequence conflict" description="In Ref. 3; AAH25783." evidence="6" ref="3">
    <original>R</original>
    <variation>H</variation>
    <location>
        <position position="173"/>
    </location>
</feature>
<feature type="sequence conflict" description="In Ref. 3; AAH25783." evidence="6" ref="3">
    <original>R</original>
    <variation>L</variation>
    <location>
        <position position="316"/>
    </location>
</feature>
<protein>
    <recommendedName>
        <fullName>Zinc finger protein 417</fullName>
    </recommendedName>
</protein>
<sequence length="575" mass="65733">MAAAAPRRPTQQGTVTFEDVAVNFSQEEWCLLSEAQRCLYRDVMLENLALISSLGCWCGSKDEEAPCKQRISVQRESQSRTPRAGVSPKKAHPCEMCGLILEDVFHFADHQETHHKQKLNRSGACGKNLDDTAYLHQHQKQHIGEKFYRKSVREASFVKKRKLRVSQEPFVFREFGKDVLPSSGLCQEAAAVEKTDSETMHGPPFQEGKTNYSCGKRTKAFSTKHSVIPHQKLFTRDGCYVCSDCGKSFSRYVSFSNHQRDHTAKGPYDCGECGKSYSRKSSLIQHQRVHTGKTAYPCEECGKSFSQKGSLISHQRVHTGERPYECREYGKSFGQKGNLIQHQQGHTGERAYHCGECGKSFRQKFCFINHQRVHTGERPYKCGECGKSFGQKGNLVQHQRGHTGERPYECKECGKSFRYRSHLTEHQRLHTGERPYNCRECGKLFNRKYHLLVHERVHTGERPYACEVCGKLFGNKNCVTIHQRIHTGERPYECNECGKSFLSSSALHVHKRVHSGQKPYKCSECGKSFAECSSLIKHRRIHTGERPYECTKCGKTFQRSSTLLHHQSSHRRKAL</sequence>